<comment type="function">
    <text evidence="1">Catalyzes the formation of S-adenosylmethionine (AdoMet) from methionine and ATP. The overall synthetic reaction is composed of two sequential steps, AdoMet formation and the subsequent tripolyphosphate hydrolysis which occurs prior to release of AdoMet from the enzyme.</text>
</comment>
<comment type="catalytic activity">
    <reaction evidence="1">
        <text>L-methionine + ATP + H2O = S-adenosyl-L-methionine + phosphate + diphosphate</text>
        <dbReference type="Rhea" id="RHEA:21080"/>
        <dbReference type="ChEBI" id="CHEBI:15377"/>
        <dbReference type="ChEBI" id="CHEBI:30616"/>
        <dbReference type="ChEBI" id="CHEBI:33019"/>
        <dbReference type="ChEBI" id="CHEBI:43474"/>
        <dbReference type="ChEBI" id="CHEBI:57844"/>
        <dbReference type="ChEBI" id="CHEBI:59789"/>
        <dbReference type="EC" id="2.5.1.6"/>
    </reaction>
</comment>
<comment type="cofactor">
    <cofactor evidence="1">
        <name>Mg(2+)</name>
        <dbReference type="ChEBI" id="CHEBI:18420"/>
    </cofactor>
    <text evidence="1">Binds 2 divalent ions per subunit.</text>
</comment>
<comment type="cofactor">
    <cofactor evidence="1">
        <name>K(+)</name>
        <dbReference type="ChEBI" id="CHEBI:29103"/>
    </cofactor>
    <text evidence="1">Binds 1 potassium ion per subunit.</text>
</comment>
<comment type="pathway">
    <text evidence="1">Amino-acid biosynthesis; S-adenosyl-L-methionine biosynthesis; S-adenosyl-L-methionine from L-methionine: step 1/1.</text>
</comment>
<comment type="subunit">
    <text evidence="1">Homotetramer; dimer of dimers.</text>
</comment>
<comment type="subcellular location">
    <subcellularLocation>
        <location evidence="1">Cytoplasm</location>
    </subcellularLocation>
</comment>
<comment type="similarity">
    <text evidence="1">Belongs to the AdoMet synthase family.</text>
</comment>
<comment type="sequence caution" evidence="2">
    <conflict type="erroneous initiation">
        <sequence resource="EMBL-CDS" id="AAS81621"/>
    </conflict>
</comment>
<accession>Q72I53</accession>
<proteinExistence type="evidence at protein level"/>
<gene>
    <name evidence="1" type="primary">metK</name>
    <name type="ordered locus">TT_C1279</name>
</gene>
<organism>
    <name type="scientific">Thermus thermophilus (strain ATCC BAA-163 / DSM 7039 / HB27)</name>
    <dbReference type="NCBI Taxonomy" id="262724"/>
    <lineage>
        <taxon>Bacteria</taxon>
        <taxon>Thermotogati</taxon>
        <taxon>Deinococcota</taxon>
        <taxon>Deinococci</taxon>
        <taxon>Thermales</taxon>
        <taxon>Thermaceae</taxon>
        <taxon>Thermus</taxon>
    </lineage>
</organism>
<protein>
    <recommendedName>
        <fullName evidence="1">S-adenosylmethionine synthase</fullName>
        <shortName evidence="1">AdoMet synthase</shortName>
        <ecNumber evidence="1">2.5.1.6</ecNumber>
    </recommendedName>
    <alternativeName>
        <fullName evidence="1">MAT</fullName>
    </alternativeName>
    <alternativeName>
        <fullName evidence="1">Methionine adenosyltransferase</fullName>
    </alternativeName>
</protein>
<evidence type="ECO:0000255" key="1">
    <source>
        <dbReference type="HAMAP-Rule" id="MF_00086"/>
    </source>
</evidence>
<evidence type="ECO:0000305" key="2"/>
<evidence type="ECO:0007829" key="3">
    <source>
        <dbReference type="PDB" id="5H9U"/>
    </source>
</evidence>
<name>METK_THET2</name>
<sequence length="395" mass="43247">MRALRLVTSESVTEGHPDKLADRISDAILDALIAQDKKARVAAETLVTTGLVFVAGEITTEGYVDIPNLVRKTVREVGYTRAKYGFDADTCAVLTAIDEQSPDIAGGVNLSYEWRVLKSTDPLDRVGAGDQGLMFGYATDETPELMPLPITLAHRLTMRLAEVRKTGLLPYLRPDGKAQVTVVYEGDKPLYVKTVVVSAQHSPEVEQEQLREDLIREVVRQAIPPEYLKDGETEYLINPSGRFILGGPHADTGLTGRKIIVDTYGGAVPHGGGAFSGKDPTKVDRSASYYARYMAKNIVAAGLARRALVELAYAIGKARPVSLRVETFGTGVLPDEKLTEIAKKVFDPRPLAIIEELDLLRPIYTPTSAYGHFGRPGFPWEETDRVEALRREAGL</sequence>
<dbReference type="EC" id="2.5.1.6" evidence="1"/>
<dbReference type="EMBL" id="AE017221">
    <property type="protein sequence ID" value="AAS81621.1"/>
    <property type="status" value="ALT_INIT"/>
    <property type="molecule type" value="Genomic_DNA"/>
</dbReference>
<dbReference type="PDB" id="5H9U">
    <property type="method" value="X-ray"/>
    <property type="resolution" value="2.67 A"/>
    <property type="chains" value="A/B/C/D=1-395"/>
</dbReference>
<dbReference type="PDBsum" id="5H9U"/>
<dbReference type="SMR" id="Q72I53"/>
<dbReference type="KEGG" id="tth:TT_C1279"/>
<dbReference type="eggNOG" id="COG0192">
    <property type="taxonomic scope" value="Bacteria"/>
</dbReference>
<dbReference type="HOGENOM" id="CLU_041802_1_1_0"/>
<dbReference type="OrthoDB" id="9801686at2"/>
<dbReference type="BRENDA" id="2.5.1.6">
    <property type="organism ID" value="2305"/>
</dbReference>
<dbReference type="UniPathway" id="UPA00315">
    <property type="reaction ID" value="UER00080"/>
</dbReference>
<dbReference type="Proteomes" id="UP000000592">
    <property type="component" value="Chromosome"/>
</dbReference>
<dbReference type="GO" id="GO:0005737">
    <property type="term" value="C:cytoplasm"/>
    <property type="evidence" value="ECO:0007669"/>
    <property type="project" value="UniProtKB-SubCell"/>
</dbReference>
<dbReference type="GO" id="GO:0005524">
    <property type="term" value="F:ATP binding"/>
    <property type="evidence" value="ECO:0007669"/>
    <property type="project" value="UniProtKB-UniRule"/>
</dbReference>
<dbReference type="GO" id="GO:0000287">
    <property type="term" value="F:magnesium ion binding"/>
    <property type="evidence" value="ECO:0007669"/>
    <property type="project" value="UniProtKB-UniRule"/>
</dbReference>
<dbReference type="GO" id="GO:0004478">
    <property type="term" value="F:methionine adenosyltransferase activity"/>
    <property type="evidence" value="ECO:0007669"/>
    <property type="project" value="UniProtKB-UniRule"/>
</dbReference>
<dbReference type="GO" id="GO:0006730">
    <property type="term" value="P:one-carbon metabolic process"/>
    <property type="evidence" value="ECO:0007669"/>
    <property type="project" value="UniProtKB-KW"/>
</dbReference>
<dbReference type="GO" id="GO:0006556">
    <property type="term" value="P:S-adenosylmethionine biosynthetic process"/>
    <property type="evidence" value="ECO:0007669"/>
    <property type="project" value="UniProtKB-UniRule"/>
</dbReference>
<dbReference type="CDD" id="cd18079">
    <property type="entry name" value="S-AdoMet_synt"/>
    <property type="match status" value="1"/>
</dbReference>
<dbReference type="FunFam" id="3.30.300.10:FF:000003">
    <property type="entry name" value="S-adenosylmethionine synthase"/>
    <property type="match status" value="1"/>
</dbReference>
<dbReference type="FunFam" id="3.30.300.10:FF:000011">
    <property type="entry name" value="S-adenosylmethionine synthase"/>
    <property type="match status" value="1"/>
</dbReference>
<dbReference type="Gene3D" id="3.30.300.10">
    <property type="match status" value="3"/>
</dbReference>
<dbReference type="HAMAP" id="MF_00086">
    <property type="entry name" value="S_AdoMet_synth1"/>
    <property type="match status" value="1"/>
</dbReference>
<dbReference type="InterPro" id="IPR022631">
    <property type="entry name" value="ADOMET_SYNTHASE_CS"/>
</dbReference>
<dbReference type="InterPro" id="IPR022630">
    <property type="entry name" value="S-AdoMet_synt_C"/>
</dbReference>
<dbReference type="InterPro" id="IPR022629">
    <property type="entry name" value="S-AdoMet_synt_central"/>
</dbReference>
<dbReference type="InterPro" id="IPR022628">
    <property type="entry name" value="S-AdoMet_synt_N"/>
</dbReference>
<dbReference type="InterPro" id="IPR002133">
    <property type="entry name" value="S-AdoMet_synthetase"/>
</dbReference>
<dbReference type="InterPro" id="IPR022636">
    <property type="entry name" value="S-AdoMet_synthetase_sfam"/>
</dbReference>
<dbReference type="NCBIfam" id="TIGR01034">
    <property type="entry name" value="metK"/>
    <property type="match status" value="1"/>
</dbReference>
<dbReference type="PANTHER" id="PTHR11964">
    <property type="entry name" value="S-ADENOSYLMETHIONINE SYNTHETASE"/>
    <property type="match status" value="1"/>
</dbReference>
<dbReference type="Pfam" id="PF02773">
    <property type="entry name" value="S-AdoMet_synt_C"/>
    <property type="match status" value="1"/>
</dbReference>
<dbReference type="Pfam" id="PF02772">
    <property type="entry name" value="S-AdoMet_synt_M"/>
    <property type="match status" value="1"/>
</dbReference>
<dbReference type="Pfam" id="PF00438">
    <property type="entry name" value="S-AdoMet_synt_N"/>
    <property type="match status" value="1"/>
</dbReference>
<dbReference type="PIRSF" id="PIRSF000497">
    <property type="entry name" value="MAT"/>
    <property type="match status" value="1"/>
</dbReference>
<dbReference type="SUPFAM" id="SSF55973">
    <property type="entry name" value="S-adenosylmethionine synthetase"/>
    <property type="match status" value="3"/>
</dbReference>
<dbReference type="PROSITE" id="PS00376">
    <property type="entry name" value="ADOMET_SYNTHASE_1"/>
    <property type="match status" value="1"/>
</dbReference>
<dbReference type="PROSITE" id="PS00377">
    <property type="entry name" value="ADOMET_SYNTHASE_2"/>
    <property type="match status" value="1"/>
</dbReference>
<reference key="1">
    <citation type="journal article" date="2004" name="Nat. Biotechnol.">
        <title>The genome sequence of the extreme thermophile Thermus thermophilus.</title>
        <authorList>
            <person name="Henne A."/>
            <person name="Brueggemann H."/>
            <person name="Raasch C."/>
            <person name="Wiezer A."/>
            <person name="Hartsch T."/>
            <person name="Liesegang H."/>
            <person name="Johann A."/>
            <person name="Lienard T."/>
            <person name="Gohl O."/>
            <person name="Martinez-Arias R."/>
            <person name="Jacobi C."/>
            <person name="Starkuviene V."/>
            <person name="Schlenczeck S."/>
            <person name="Dencker S."/>
            <person name="Huber R."/>
            <person name="Klenk H.-P."/>
            <person name="Kramer W."/>
            <person name="Merkl R."/>
            <person name="Gottschalk G."/>
            <person name="Fritz H.-J."/>
        </authorList>
    </citation>
    <scope>NUCLEOTIDE SEQUENCE [LARGE SCALE GENOMIC DNA]</scope>
    <source>
        <strain>ATCC BAA-163 / DSM 7039 / HB27</strain>
    </source>
</reference>
<feature type="chain" id="PRO_0000174614" description="S-adenosylmethionine synthase">
    <location>
        <begin position="1"/>
        <end position="395"/>
    </location>
</feature>
<feature type="region of interest" description="Flexible loop" evidence="1">
    <location>
        <begin position="100"/>
        <end position="110"/>
    </location>
</feature>
<feature type="binding site" description="in other chain" evidence="1">
    <location>
        <position position="16"/>
    </location>
    <ligand>
        <name>ATP</name>
        <dbReference type="ChEBI" id="CHEBI:30616"/>
        <note>ligand shared between two neighboring subunits</note>
    </ligand>
</feature>
<feature type="binding site" evidence="1">
    <location>
        <position position="18"/>
    </location>
    <ligand>
        <name>Mg(2+)</name>
        <dbReference type="ChEBI" id="CHEBI:18420"/>
    </ligand>
</feature>
<feature type="binding site" evidence="1">
    <location>
        <position position="44"/>
    </location>
    <ligand>
        <name>K(+)</name>
        <dbReference type="ChEBI" id="CHEBI:29103"/>
    </ligand>
</feature>
<feature type="binding site" description="in other chain" evidence="1">
    <location>
        <position position="57"/>
    </location>
    <ligand>
        <name>L-methionine</name>
        <dbReference type="ChEBI" id="CHEBI:57844"/>
        <note>ligand shared between two neighboring subunits</note>
    </ligand>
</feature>
<feature type="binding site" description="in other chain" evidence="1">
    <location>
        <position position="100"/>
    </location>
    <ligand>
        <name>L-methionine</name>
        <dbReference type="ChEBI" id="CHEBI:57844"/>
        <note>ligand shared between two neighboring subunits</note>
    </ligand>
</feature>
<feature type="binding site" description="in other chain" evidence="1">
    <location>
        <begin position="175"/>
        <end position="177"/>
    </location>
    <ligand>
        <name>ATP</name>
        <dbReference type="ChEBI" id="CHEBI:30616"/>
        <note>ligand shared between two neighboring subunits</note>
    </ligand>
</feature>
<feature type="binding site" description="in other chain" evidence="1">
    <location>
        <begin position="242"/>
        <end position="243"/>
    </location>
    <ligand>
        <name>ATP</name>
        <dbReference type="ChEBI" id="CHEBI:30616"/>
        <note>ligand shared between two neighboring subunits</note>
    </ligand>
</feature>
<feature type="binding site" evidence="1">
    <location>
        <position position="251"/>
    </location>
    <ligand>
        <name>ATP</name>
        <dbReference type="ChEBI" id="CHEBI:30616"/>
        <note>ligand shared between two neighboring subunits</note>
    </ligand>
</feature>
<feature type="binding site" evidence="1">
    <location>
        <position position="251"/>
    </location>
    <ligand>
        <name>L-methionine</name>
        <dbReference type="ChEBI" id="CHEBI:57844"/>
        <note>ligand shared between two neighboring subunits</note>
    </ligand>
</feature>
<feature type="binding site" description="in other chain" evidence="1">
    <location>
        <begin position="257"/>
        <end position="258"/>
    </location>
    <ligand>
        <name>ATP</name>
        <dbReference type="ChEBI" id="CHEBI:30616"/>
        <note>ligand shared between two neighboring subunits</note>
    </ligand>
</feature>
<feature type="binding site" evidence="1">
    <location>
        <position position="274"/>
    </location>
    <ligand>
        <name>ATP</name>
        <dbReference type="ChEBI" id="CHEBI:30616"/>
        <note>ligand shared between two neighboring subunits</note>
    </ligand>
</feature>
<feature type="binding site" evidence="1">
    <location>
        <position position="278"/>
    </location>
    <ligand>
        <name>ATP</name>
        <dbReference type="ChEBI" id="CHEBI:30616"/>
        <note>ligand shared between two neighboring subunits</note>
    </ligand>
</feature>
<feature type="binding site" description="in other chain" evidence="1">
    <location>
        <position position="282"/>
    </location>
    <ligand>
        <name>L-methionine</name>
        <dbReference type="ChEBI" id="CHEBI:57844"/>
        <note>ligand shared between two neighboring subunits</note>
    </ligand>
</feature>
<feature type="strand" evidence="3">
    <location>
        <begin position="4"/>
        <end position="12"/>
    </location>
</feature>
<feature type="helix" evidence="3">
    <location>
        <begin position="17"/>
        <end position="35"/>
    </location>
</feature>
<feature type="strand" evidence="3">
    <location>
        <begin position="40"/>
        <end position="48"/>
    </location>
</feature>
<feature type="strand" evidence="3">
    <location>
        <begin position="51"/>
        <end position="59"/>
    </location>
</feature>
<feature type="helix" evidence="3">
    <location>
        <begin position="66"/>
        <end position="77"/>
    </location>
</feature>
<feature type="helix" evidence="3">
    <location>
        <begin position="82"/>
        <end position="84"/>
    </location>
</feature>
<feature type="turn" evidence="3">
    <location>
        <begin position="88"/>
        <end position="90"/>
    </location>
</feature>
<feature type="strand" evidence="3">
    <location>
        <begin position="91"/>
        <end position="100"/>
    </location>
</feature>
<feature type="helix" evidence="3">
    <location>
        <begin position="112"/>
        <end position="115"/>
    </location>
</feature>
<feature type="helix" evidence="3">
    <location>
        <begin position="122"/>
        <end position="124"/>
    </location>
</feature>
<feature type="strand" evidence="3">
    <location>
        <begin position="128"/>
        <end position="130"/>
    </location>
</feature>
<feature type="strand" evidence="3">
    <location>
        <begin position="132"/>
        <end position="139"/>
    </location>
</feature>
<feature type="helix" evidence="3">
    <location>
        <begin position="148"/>
        <end position="165"/>
    </location>
</feature>
<feature type="strand" evidence="3">
    <location>
        <begin position="172"/>
        <end position="185"/>
    </location>
</feature>
<feature type="strand" evidence="3">
    <location>
        <begin position="188"/>
        <end position="201"/>
    </location>
</feature>
<feature type="helix" evidence="3">
    <location>
        <begin position="207"/>
        <end position="217"/>
    </location>
</feature>
<feature type="helix" evidence="3">
    <location>
        <begin position="219"/>
        <end position="222"/>
    </location>
</feature>
<feature type="helix" evidence="3">
    <location>
        <begin position="225"/>
        <end position="227"/>
    </location>
</feature>
<feature type="turn" evidence="3">
    <location>
        <begin position="230"/>
        <end position="232"/>
    </location>
</feature>
<feature type="strand" evidence="3">
    <location>
        <begin position="233"/>
        <end position="238"/>
    </location>
</feature>
<feature type="helix" evidence="3">
    <location>
        <begin position="247"/>
        <end position="249"/>
    </location>
</feature>
<feature type="helix" evidence="3">
    <location>
        <begin position="259"/>
        <end position="262"/>
    </location>
</feature>
<feature type="turn" evidence="3">
    <location>
        <begin position="263"/>
        <end position="266"/>
    </location>
</feature>
<feature type="strand" evidence="3">
    <location>
        <begin position="267"/>
        <end position="269"/>
    </location>
</feature>
<feature type="helix" evidence="3">
    <location>
        <begin position="283"/>
        <end position="300"/>
    </location>
</feature>
<feature type="strand" evidence="3">
    <location>
        <begin position="305"/>
        <end position="313"/>
    </location>
</feature>
<feature type="strand" evidence="3">
    <location>
        <begin position="321"/>
        <end position="326"/>
    </location>
</feature>
<feature type="helix" evidence="3">
    <location>
        <begin position="335"/>
        <end position="345"/>
    </location>
</feature>
<feature type="helix" evidence="3">
    <location>
        <begin position="350"/>
        <end position="357"/>
    </location>
</feature>
<feature type="helix" evidence="3">
    <location>
        <begin position="365"/>
        <end position="368"/>
    </location>
</feature>
<feature type="strand" evidence="3">
    <location>
        <begin position="372"/>
        <end position="374"/>
    </location>
</feature>
<feature type="helix" evidence="3">
    <location>
        <begin position="379"/>
        <end position="381"/>
    </location>
</feature>
<feature type="helix" evidence="3">
    <location>
        <begin position="386"/>
        <end position="393"/>
    </location>
</feature>
<keyword id="KW-0002">3D-structure</keyword>
<keyword id="KW-0067">ATP-binding</keyword>
<keyword id="KW-0963">Cytoplasm</keyword>
<keyword id="KW-0460">Magnesium</keyword>
<keyword id="KW-0479">Metal-binding</keyword>
<keyword id="KW-0547">Nucleotide-binding</keyword>
<keyword id="KW-0554">One-carbon metabolism</keyword>
<keyword id="KW-0630">Potassium</keyword>
<keyword id="KW-0808">Transferase</keyword>